<gene>
    <name type="primary">KOG1</name>
    <name type="synonym">LAS24</name>
    <name type="ordered locus">YHR186C</name>
    <name type="ORF">H9998.14</name>
</gene>
<dbReference type="EMBL" id="U00030">
    <property type="protein sequence ID" value="AAB68364.1"/>
    <property type="status" value="ALT_INIT"/>
    <property type="molecule type" value="Genomic_DNA"/>
</dbReference>
<dbReference type="EMBL" id="BK006934">
    <property type="protein sequence ID" value="DAA06878.1"/>
    <property type="molecule type" value="Genomic_DNA"/>
</dbReference>
<dbReference type="PIR" id="S46686">
    <property type="entry name" value="S46686"/>
</dbReference>
<dbReference type="RefSeq" id="NP_012056.1">
    <property type="nucleotide sequence ID" value="NM_001179317.1"/>
</dbReference>
<dbReference type="PDB" id="7PQH">
    <property type="method" value="EM"/>
    <property type="resolution" value="3.87 A"/>
    <property type="chains" value="A/B/G/J=1-1557"/>
</dbReference>
<dbReference type="PDBsum" id="7PQH"/>
<dbReference type="EMDB" id="EMD-13594"/>
<dbReference type="SMR" id="P38873"/>
<dbReference type="BioGRID" id="36620">
    <property type="interactions" value="558"/>
</dbReference>
<dbReference type="ComplexPortal" id="CPX-1715">
    <property type="entry name" value="TORC1 serine/threonine-protein kinase complex, TOR1 variant"/>
</dbReference>
<dbReference type="ComplexPortal" id="CPX-1716">
    <property type="entry name" value="TORC1 serine/threonine-protein kinase complex, TOR2 variant"/>
</dbReference>
<dbReference type="DIP" id="DIP-2639N"/>
<dbReference type="FunCoup" id="P38873">
    <property type="interactions" value="1010"/>
</dbReference>
<dbReference type="IntAct" id="P38873">
    <property type="interactions" value="50"/>
</dbReference>
<dbReference type="MINT" id="P38873"/>
<dbReference type="STRING" id="4932.YHR186C"/>
<dbReference type="GlyGen" id="P38873">
    <property type="glycosylation" value="1 site"/>
</dbReference>
<dbReference type="iPTMnet" id="P38873"/>
<dbReference type="PaxDb" id="4932-YHR186C"/>
<dbReference type="PeptideAtlas" id="P38873"/>
<dbReference type="EnsemblFungi" id="YHR186C_mRNA">
    <property type="protein sequence ID" value="YHR186C"/>
    <property type="gene ID" value="YHR186C"/>
</dbReference>
<dbReference type="GeneID" id="856593"/>
<dbReference type="KEGG" id="sce:YHR186C"/>
<dbReference type="AGR" id="SGD:S000001229"/>
<dbReference type="SGD" id="S000001229">
    <property type="gene designation" value="KOG1"/>
</dbReference>
<dbReference type="VEuPathDB" id="FungiDB:YHR186C"/>
<dbReference type="eggNOG" id="KOG1517">
    <property type="taxonomic scope" value="Eukaryota"/>
</dbReference>
<dbReference type="GeneTree" id="ENSGT00640000091541"/>
<dbReference type="HOGENOM" id="CLU_001136_0_2_1"/>
<dbReference type="InParanoid" id="P38873"/>
<dbReference type="OMA" id="TEVCTND"/>
<dbReference type="OrthoDB" id="10262360at2759"/>
<dbReference type="BioCyc" id="YEAST:G3O-31216-MONOMER"/>
<dbReference type="Reactome" id="R-SCE-3371571">
    <property type="pathway name" value="HSF1-dependent transactivation"/>
</dbReference>
<dbReference type="Reactome" id="R-SCE-9639288">
    <property type="pathway name" value="Amino acids regulate mTORC1"/>
</dbReference>
<dbReference type="BioGRID-ORCS" id="856593">
    <property type="hits" value="0 hits in 10 CRISPR screens"/>
</dbReference>
<dbReference type="CD-CODE" id="E03F929F">
    <property type="entry name" value="Stress granule"/>
</dbReference>
<dbReference type="PRO" id="PR:P38873"/>
<dbReference type="Proteomes" id="UP000002311">
    <property type="component" value="Chromosome VIII"/>
</dbReference>
<dbReference type="RNAct" id="P38873">
    <property type="molecule type" value="protein"/>
</dbReference>
<dbReference type="GO" id="GO:0005737">
    <property type="term" value="C:cytoplasm"/>
    <property type="evidence" value="ECO:0000318"/>
    <property type="project" value="GO_Central"/>
</dbReference>
<dbReference type="GO" id="GO:0010494">
    <property type="term" value="C:cytoplasmic stress granule"/>
    <property type="evidence" value="ECO:0007005"/>
    <property type="project" value="SGD"/>
</dbReference>
<dbReference type="GO" id="GO:0000329">
    <property type="term" value="C:fungal-type vacuole membrane"/>
    <property type="evidence" value="ECO:0000314"/>
    <property type="project" value="SGD"/>
</dbReference>
<dbReference type="GO" id="GO:0005739">
    <property type="term" value="C:mitochondrion"/>
    <property type="evidence" value="ECO:0007005"/>
    <property type="project" value="SGD"/>
</dbReference>
<dbReference type="GO" id="GO:0005886">
    <property type="term" value="C:plasma membrane"/>
    <property type="evidence" value="ECO:0000314"/>
    <property type="project" value="SGD"/>
</dbReference>
<dbReference type="GO" id="GO:0031931">
    <property type="term" value="C:TORC1 complex"/>
    <property type="evidence" value="ECO:0000353"/>
    <property type="project" value="SGD"/>
</dbReference>
<dbReference type="GO" id="GO:0030674">
    <property type="term" value="F:protein-macromolecule adaptor activity"/>
    <property type="evidence" value="ECO:0000318"/>
    <property type="project" value="GO_Central"/>
</dbReference>
<dbReference type="GO" id="GO:0043130">
    <property type="term" value="F:ubiquitin binding"/>
    <property type="evidence" value="ECO:0000314"/>
    <property type="project" value="SGD"/>
</dbReference>
<dbReference type="GO" id="GO:0071230">
    <property type="term" value="P:cellular response to amino acid stimulus"/>
    <property type="evidence" value="ECO:0000318"/>
    <property type="project" value="GO_Central"/>
</dbReference>
<dbReference type="GO" id="GO:0009267">
    <property type="term" value="P:cellular response to starvation"/>
    <property type="evidence" value="ECO:0000315"/>
    <property type="project" value="SGD"/>
</dbReference>
<dbReference type="GO" id="GO:0030307">
    <property type="term" value="P:positive regulation of cell growth"/>
    <property type="evidence" value="ECO:0000318"/>
    <property type="project" value="GO_Central"/>
</dbReference>
<dbReference type="GO" id="GO:0010506">
    <property type="term" value="P:regulation of autophagy"/>
    <property type="evidence" value="ECO:0000318"/>
    <property type="project" value="GO_Central"/>
</dbReference>
<dbReference type="GO" id="GO:0051726">
    <property type="term" value="P:regulation of cell cycle"/>
    <property type="evidence" value="ECO:0000303"/>
    <property type="project" value="ComplexPortal"/>
</dbReference>
<dbReference type="GO" id="GO:0001558">
    <property type="term" value="P:regulation of cell growth"/>
    <property type="evidence" value="ECO:0000353"/>
    <property type="project" value="SGD"/>
</dbReference>
<dbReference type="GO" id="GO:0007584">
    <property type="term" value="P:response to nutrient"/>
    <property type="evidence" value="ECO:0000303"/>
    <property type="project" value="ComplexPortal"/>
</dbReference>
<dbReference type="GO" id="GO:0031929">
    <property type="term" value="P:TOR signaling"/>
    <property type="evidence" value="ECO:0000318"/>
    <property type="project" value="GO_Central"/>
</dbReference>
<dbReference type="FunFam" id="2.130.10.10:FF:000514">
    <property type="entry name" value="TORC1 growth control complex subunit Kog1"/>
    <property type="match status" value="1"/>
</dbReference>
<dbReference type="FunFam" id="2.130.10.10:FF:000278">
    <property type="entry name" value="WD repeat-containing protein mip1"/>
    <property type="match status" value="1"/>
</dbReference>
<dbReference type="Gene3D" id="1.25.10.10">
    <property type="entry name" value="Leucine-rich Repeat Variant"/>
    <property type="match status" value="1"/>
</dbReference>
<dbReference type="Gene3D" id="2.130.10.10">
    <property type="entry name" value="YVTN repeat-like/Quinoprotein amine dehydrogenase"/>
    <property type="match status" value="2"/>
</dbReference>
<dbReference type="InterPro" id="IPR011989">
    <property type="entry name" value="ARM-like"/>
</dbReference>
<dbReference type="InterPro" id="IPR016024">
    <property type="entry name" value="ARM-type_fold"/>
</dbReference>
<dbReference type="InterPro" id="IPR000357">
    <property type="entry name" value="HEAT"/>
</dbReference>
<dbReference type="InterPro" id="IPR004083">
    <property type="entry name" value="Raptor"/>
</dbReference>
<dbReference type="InterPro" id="IPR029347">
    <property type="entry name" value="Raptor_N"/>
</dbReference>
<dbReference type="InterPro" id="IPR015943">
    <property type="entry name" value="WD40/YVTN_repeat-like_dom_sf"/>
</dbReference>
<dbReference type="InterPro" id="IPR036322">
    <property type="entry name" value="WD40_repeat_dom_sf"/>
</dbReference>
<dbReference type="InterPro" id="IPR001680">
    <property type="entry name" value="WD40_rpt"/>
</dbReference>
<dbReference type="PANTHER" id="PTHR12848">
    <property type="entry name" value="REGULATORY-ASSOCIATED PROTEIN OF MTOR"/>
    <property type="match status" value="1"/>
</dbReference>
<dbReference type="PANTHER" id="PTHR12848:SF16">
    <property type="entry name" value="REGULATORY-ASSOCIATED PROTEIN OF MTOR"/>
    <property type="match status" value="1"/>
</dbReference>
<dbReference type="Pfam" id="PF02985">
    <property type="entry name" value="HEAT"/>
    <property type="match status" value="1"/>
</dbReference>
<dbReference type="Pfam" id="PF14538">
    <property type="entry name" value="Raptor_N"/>
    <property type="match status" value="1"/>
</dbReference>
<dbReference type="PRINTS" id="PR01547">
    <property type="entry name" value="YEAST176DUF"/>
</dbReference>
<dbReference type="SMART" id="SM01302">
    <property type="entry name" value="Raptor_N"/>
    <property type="match status" value="1"/>
</dbReference>
<dbReference type="SMART" id="SM00320">
    <property type="entry name" value="WD40"/>
    <property type="match status" value="5"/>
</dbReference>
<dbReference type="SUPFAM" id="SSF48371">
    <property type="entry name" value="ARM repeat"/>
    <property type="match status" value="1"/>
</dbReference>
<dbReference type="SUPFAM" id="SSF50978">
    <property type="entry name" value="WD40 repeat-like"/>
    <property type="match status" value="1"/>
</dbReference>
<dbReference type="PROSITE" id="PS00678">
    <property type="entry name" value="WD_REPEATS_1"/>
    <property type="match status" value="1"/>
</dbReference>
<dbReference type="PROSITE" id="PS50082">
    <property type="entry name" value="WD_REPEATS_2"/>
    <property type="match status" value="1"/>
</dbReference>
<dbReference type="PROSITE" id="PS50294">
    <property type="entry name" value="WD_REPEATS_REGION"/>
    <property type="match status" value="1"/>
</dbReference>
<protein>
    <recommendedName>
        <fullName>Target of rapamycin complex 1 subunit KOG1</fullName>
        <shortName>TORC1 subunit KOG1</shortName>
    </recommendedName>
    <alternativeName>
        <fullName>Kontroller of growth protein 1</fullName>
    </alternativeName>
    <alternativeName>
        <fullName>Local anesthetic-sensitive protein 24</fullName>
    </alternativeName>
    <alternativeName>
        <fullName evidence="1">Regulatory-associated protein of TOR</fullName>
        <shortName evidence="9">Raptor</shortName>
    </alternativeName>
</protein>
<organism>
    <name type="scientific">Saccharomyces cerevisiae (strain ATCC 204508 / S288c)</name>
    <name type="common">Baker's yeast</name>
    <dbReference type="NCBI Taxonomy" id="559292"/>
    <lineage>
        <taxon>Eukaryota</taxon>
        <taxon>Fungi</taxon>
        <taxon>Dikarya</taxon>
        <taxon>Ascomycota</taxon>
        <taxon>Saccharomycotina</taxon>
        <taxon>Saccharomycetes</taxon>
        <taxon>Saccharomycetales</taxon>
        <taxon>Saccharomycetaceae</taxon>
        <taxon>Saccharomyces</taxon>
    </lineage>
</organism>
<accession>P38873</accession>
<accession>D3DLD4</accession>
<keyword id="KW-0002">3D-structure</keyword>
<keyword id="KW-1003">Cell membrane</keyword>
<keyword id="KW-0472">Membrane</keyword>
<keyword id="KW-1185">Reference proteome</keyword>
<keyword id="KW-0677">Repeat</keyword>
<keyword id="KW-0926">Vacuole</keyword>
<keyword id="KW-0853">WD repeat</keyword>
<feature type="chain" id="PRO_0000051476" description="Target of rapamycin complex 1 subunit KOG1">
    <location>
        <begin position="1"/>
        <end position="1557"/>
    </location>
</feature>
<feature type="repeat" description="HEAT 1">
    <location>
        <begin position="548"/>
        <end position="586"/>
    </location>
</feature>
<feature type="repeat" description="HEAT 2">
    <location>
        <begin position="588"/>
        <end position="625"/>
    </location>
</feature>
<feature type="repeat" description="HEAT 3">
    <location>
        <begin position="777"/>
        <end position="814"/>
    </location>
</feature>
<feature type="repeat" description="HEAT 4">
    <location>
        <begin position="888"/>
        <end position="925"/>
    </location>
</feature>
<feature type="repeat" description="WD 1">
    <location>
        <begin position="1207"/>
        <end position="1248"/>
    </location>
</feature>
<feature type="repeat" description="WD 2">
    <location>
        <begin position="1252"/>
        <end position="1293"/>
    </location>
</feature>
<feature type="repeat" description="WD 3">
    <location>
        <begin position="1296"/>
        <end position="1346"/>
    </location>
</feature>
<feature type="repeat" description="WD 4">
    <location>
        <begin position="1350"/>
        <end position="1390"/>
    </location>
</feature>
<feature type="repeat" description="WD 5">
    <location>
        <begin position="1400"/>
        <end position="1440"/>
    </location>
</feature>
<feature type="repeat" description="WD 6">
    <location>
        <begin position="1452"/>
        <end position="1492"/>
    </location>
</feature>
<feature type="repeat" description="WD 7">
    <location>
        <begin position="1517"/>
        <end position="1557"/>
    </location>
</feature>
<feature type="region of interest" description="Disordered" evidence="2">
    <location>
        <begin position="1084"/>
        <end position="1114"/>
    </location>
</feature>
<feature type="compositionally biased region" description="Low complexity" evidence="2">
    <location>
        <begin position="1084"/>
        <end position="1098"/>
    </location>
</feature>
<evidence type="ECO:0000250" key="1">
    <source>
        <dbReference type="UniProtKB" id="Q8N122"/>
    </source>
</evidence>
<evidence type="ECO:0000256" key="2">
    <source>
        <dbReference type="SAM" id="MobiDB-lite"/>
    </source>
</evidence>
<evidence type="ECO:0000269" key="3">
    <source>
    </source>
</evidence>
<evidence type="ECO:0000269" key="4">
    <source>
    </source>
</evidence>
<evidence type="ECO:0000269" key="5">
    <source>
    </source>
</evidence>
<evidence type="ECO:0000269" key="6">
    <source>
    </source>
</evidence>
<evidence type="ECO:0000269" key="7">
    <source>
    </source>
</evidence>
<evidence type="ECO:0000269" key="8">
    <source>
    </source>
</evidence>
<evidence type="ECO:0000305" key="9"/>
<evidence type="ECO:0000305" key="10">
    <source>
    </source>
</evidence>
<proteinExistence type="evidence at protein level"/>
<comment type="function">
    <text evidence="6">Component of TORC1, which regulates multiple cellular processes to control cell growth in response to environmental signals. Nutrient limitation and environmental stress signals cause inactivation of TORC1. Active TORC1 positively controls ribosome biogenesis via control of rRNA, ribosomal protein and tRNA gene expression, and rRNA processing. TORC1 positively controls protein biosynthesis by regulation of mRNA stability, translation initiation factor activity, and high-affinity amino acid permeases that serve to provide amino acids for use by the translation machinery. TORC1 also promotes growth by sequestering a number of nutrient and general stress-responsive transcription factors in the cytoplasm. TORC1 negatively controls macroautophagy, a process to recycle surplus cytoplasmic mass under nutrient starvation conditions. KOG1 may have a role in binding and recruiting substrates of TORC1.</text>
</comment>
<comment type="subunit">
    <text evidence="3 4 6 8">The target of rapamycin complex 1 (TORC1) is composed of at least KOG1, LST8, TCO89 and either TOR1 (TORC1-A) or TOR2 (TORC1-B) (PubMed:12408816, PubMed:12631735, PubMed:16394584). Interacts with PIB2; following activation of PIB2 by glutamine or cysteine (PubMed:29698392). TORC1 binds to and is inhibited by FKBP-rapamycin (PubMed:12408816).</text>
</comment>
<comment type="interaction">
    <interactant intactId="EBI-24864">
        <id>P38873</id>
    </interactant>
    <interactant intactId="EBI-9937">
        <id>P38691</id>
        <label>KSP1</label>
    </interactant>
    <organismsDiffer>false</organismsDiffer>
    <experiments>4</experiments>
</comment>
<comment type="interaction">
    <interactant intactId="EBI-24864">
        <id>P38873</id>
    </interactant>
    <interactant intactId="EBI-28598">
        <id>P41318</id>
        <label>LST8</label>
    </interactant>
    <organismsDiffer>false</organismsDiffer>
    <experiments>3</experiments>
</comment>
<comment type="interaction">
    <interactant intactId="EBI-24864">
        <id>P38873</id>
    </interactant>
    <interactant intactId="EBI-19374">
        <id>P35169</id>
        <label>TOR1</label>
    </interactant>
    <organismsDiffer>false</organismsDiffer>
    <experiments>7</experiments>
</comment>
<comment type="subcellular location">
    <subcellularLocation>
        <location>Cell membrane</location>
        <topology>Peripheral membrane protein</topology>
        <orientation>Cytoplasmic side</orientation>
    </subcellularLocation>
    <subcellularLocation>
        <location evidence="5 6 7">Vacuole membrane</location>
        <topology evidence="9">Peripheral membrane protein</topology>
        <orientation evidence="10">Cytoplasmic side</orientation>
    </subcellularLocation>
    <text evidence="6">Also localizes to membranous structures within the cell interior, probably endosomal or Golgi membranes.</text>
</comment>
<comment type="similarity">
    <text evidence="9">Belongs to the WD repeat RAPTOR family.</text>
</comment>
<comment type="sequence caution" evidence="9">
    <conflict type="erroneous initiation">
        <sequence resource="EMBL-CDS" id="AAB68364"/>
    </conflict>
</comment>
<name>KOG1_YEAST</name>
<sequence>MPEIYGPQPLKPLNTVMRHGFEEQYQSDQLLQSLANDFIFYFDDKRHKTNGNPIPEEDKQRDVNRYYQPITDWKIMKDRQKTVSAALLLCLNLGVDPPDVMKTHPCARVEAWVDPLNFQDSKKAIEQIGKNLQAQYETLSLRTRYKQSLDPCVEDVKRFCNSLRRTSKEDRILFHYNGHGVPKPTKSGEIWVFNRGYTQYIPVSLYDLQTWLGAPCIFVYDCNSAENILINFQKFVQKRIKDDEEGNHDVAAPSPTSAYQDCFQLASCTSDELLLMSPELPADLFSCCLTCPIEISIRIFLMQSPLKDSKYKIFFENSTSNQPFGDSKNSFKSKIPNVNIPGMLSDRRTPLGELNWIFTAITDTIAWTSLPRPLFKKLFRHDLMIAALFRNFLLAKRIMPWYNCHPVSDPELPDSITTHPMWKSWDLAMDEVLTKIVIDLKNAPPATALESQMILQQQETLQNGGSSKSNAQDTKAGSIQTQSRFAVANLSTMSLVNNPALQSRKSISLQSSQQQLQQQQQQQQQFTGFFEQNLTAFELWLKYASNVRHPPEQLPIVLQVLLSQVHRIRALVLLSRFLDLGPWAVYLSLSIGIFPYVLKLLQSPAPELKPILVFIWARIMSIDYKNTQSELIKEKGYMYFVTVLVPDWGVNGMSATNGSAMINSGNPLTMTASQNINGPSSRYYERQQGNRTSNLGHNNLPFYHSNDTTDEQKAMAVFVLASFVRNFPLGQKNCFSLELVNKLCFYIDNSEIPLLRQWCVILLGLLFADNPLNRFVCMNTGAVEILLKSLKDPVPEVRTASIFALKHFISGFQDAEVILRLQQEFEEQYQQLHSQLQHLQNQSHLQQQQSQQQQQHLEQQQMKIEKQIRHCQVMQNQLEVIDLRKLKRQEIGNLISILPLINDGSSLVRKELVVYFSHIVSRYSNFFIVVVFNDLLEEIKLLEKSDINTRNTSDKYSVSQGSIFYTVWKSLLILAEDPFLENKELSKQVIDYILLELSAHKELGGPFAVMEKFLLKRSSKAHQTGKFGFNSSQVQFVKSSLRSFSPNERVDNNAFKKEQQQHDPKISHPMRTSLAKLFQSLGFSESNSDSDTQSSNTSMKSHTSKKGPSGLYLLNGNNNIYPTAETPRFRKHTEPLQLPLNSSFLDYSREYFQEPQMKKQEADEPGSVEYNARLWRRNRNETIIQETQGEKKLSIYGNWSKKLISLNNKSQPKLMKFAQFEDQLITADDRSTITVFDWEKGKTLSKFSNGTPFGTKVTDLKLINEDDSALLLTGSSDGVIKIYRDYQDVDTFKIVSAWRGLTDMLLTPRSTGLLTEWLQIRGSLLTTGDVKVIRVWDAHTETVEVDIPAKTSSLITSLTADQLAGNIFVAGFADGSLRVYDRRLDPRDSMIRRWRAGNDKQGVWINNVHLQRGGYRELVSGATNGVVELWDIRSEDPVESFVDQNVTSQYGSQQKPTTMTCMQVHEHAPIIATGTKQIKIWTTSGDLLNSFKNSHNNGVTSTLAATGIPKSLSYSSTSDAFLSSMAFHPHRMMIAATNSHDSIVNIYKCEDERIDYF</sequence>
<reference key="1">
    <citation type="journal article" date="1994" name="Science">
        <title>Complete nucleotide sequence of Saccharomyces cerevisiae chromosome VIII.</title>
        <authorList>
            <person name="Johnston M."/>
            <person name="Andrews S."/>
            <person name="Brinkman R."/>
            <person name="Cooper J."/>
            <person name="Ding H."/>
            <person name="Dover J."/>
            <person name="Du Z."/>
            <person name="Favello A."/>
            <person name="Fulton L."/>
            <person name="Gattung S."/>
            <person name="Geisel C."/>
            <person name="Kirsten J."/>
            <person name="Kucaba T."/>
            <person name="Hillier L.W."/>
            <person name="Jier M."/>
            <person name="Johnston L."/>
            <person name="Langston Y."/>
            <person name="Latreille P."/>
            <person name="Louis E.J."/>
            <person name="Macri C."/>
            <person name="Mardis E."/>
            <person name="Menezes S."/>
            <person name="Mouser L."/>
            <person name="Nhan M."/>
            <person name="Rifkin L."/>
            <person name="Riles L."/>
            <person name="St Peter H."/>
            <person name="Trevaskis E."/>
            <person name="Vaughan K."/>
            <person name="Vignati D."/>
            <person name="Wilcox L."/>
            <person name="Wohldman P."/>
            <person name="Waterston R."/>
            <person name="Wilson R."/>
            <person name="Vaudin M."/>
        </authorList>
    </citation>
    <scope>NUCLEOTIDE SEQUENCE [LARGE SCALE GENOMIC DNA]</scope>
    <source>
        <strain>ATCC 204508 / S288c</strain>
    </source>
</reference>
<reference key="2">
    <citation type="journal article" date="2014" name="G3 (Bethesda)">
        <title>The reference genome sequence of Saccharomyces cerevisiae: Then and now.</title>
        <authorList>
            <person name="Engel S.R."/>
            <person name="Dietrich F.S."/>
            <person name="Fisk D.G."/>
            <person name="Binkley G."/>
            <person name="Balakrishnan R."/>
            <person name="Costanzo M.C."/>
            <person name="Dwight S.S."/>
            <person name="Hitz B.C."/>
            <person name="Karra K."/>
            <person name="Nash R.S."/>
            <person name="Weng S."/>
            <person name="Wong E.D."/>
            <person name="Lloyd P."/>
            <person name="Skrzypek M.S."/>
            <person name="Miyasato S.R."/>
            <person name="Simison M."/>
            <person name="Cherry J.M."/>
        </authorList>
    </citation>
    <scope>GENOME REANNOTATION</scope>
    <source>
        <strain>ATCC 204508 / S288c</strain>
    </source>
</reference>
<reference key="3">
    <citation type="journal article" date="2002" name="Mol. Cell">
        <title>Two TOR complexes, only one of which is rapamycin sensitive, have distinct roles in cell growth control.</title>
        <authorList>
            <person name="Loewith R."/>
            <person name="Jacinto E."/>
            <person name="Wullschleger S."/>
            <person name="Lorberg A."/>
            <person name="Crespo J.L."/>
            <person name="Bonenfant D."/>
            <person name="Oppliger W."/>
            <person name="Jenoe P."/>
            <person name="Hall M.N."/>
        </authorList>
    </citation>
    <scope>IDENTIFICATION IN TORC1</scope>
    <scope>IDENTIFICATION BY MASS SPECTROMETRY</scope>
</reference>
<reference key="4">
    <citation type="journal article" date="2003" name="Mol. Biol. Cell">
        <title>Tor kinases are in distinct membrane-associated protein complexes in Saccharomyces cerevisiae.</title>
        <authorList>
            <person name="Wedaman K.P."/>
            <person name="Reinke A."/>
            <person name="Anderson S."/>
            <person name="Yates J.R. III"/>
            <person name="McCaffery J.M."/>
            <person name="Powers T."/>
        </authorList>
    </citation>
    <scope>SUBUNIT</scope>
    <scope>INTERACTION WITH TOR1</scope>
</reference>
<reference key="5">
    <citation type="journal article" date="2003" name="Nature">
        <title>Global analysis of protein localization in budding yeast.</title>
        <authorList>
            <person name="Huh W.-K."/>
            <person name="Falvo J.V."/>
            <person name="Gerke L.C."/>
            <person name="Carroll A.S."/>
            <person name="Howson R.W."/>
            <person name="Weissman J.S."/>
            <person name="O'Shea E.K."/>
        </authorList>
    </citation>
    <scope>SUBCELLULAR LOCATION [LARGE SCALE ANALYSIS]</scope>
</reference>
<reference key="6">
    <citation type="journal article" date="2005" name="Genes Genet. Syst.">
        <title>LAS24/KOG1, a component of the TOR complex 1 (TORC1), is needed for resistance to local anesthetic tetracaine and normal distribution of actin cytoskeleton in yeast.</title>
        <authorList>
            <person name="Araki T."/>
            <person name="Uesono Y."/>
            <person name="Oguchi T."/>
            <person name="Toh-e A."/>
        </authorList>
    </citation>
    <scope>FUNCTION</scope>
    <scope>SUBUNIT</scope>
    <scope>SUBCELLULAR LOCATION</scope>
</reference>
<reference key="7">
    <citation type="journal article" date="2008" name="Mol. Cell. Proteomics">
        <title>A multidimensional chromatography technology for in-depth phosphoproteome analysis.</title>
        <authorList>
            <person name="Albuquerque C.P."/>
            <person name="Smolka M.B."/>
            <person name="Payne S.H."/>
            <person name="Bafna V."/>
            <person name="Eng J."/>
            <person name="Zhou H."/>
        </authorList>
    </citation>
    <scope>IDENTIFICATION BY MASS SPECTROMETRY [LARGE SCALE ANALYSIS]</scope>
</reference>
<reference key="8">
    <citation type="journal article" date="2009" name="Science">
        <title>Global analysis of Cdk1 substrate phosphorylation sites provides insights into evolution.</title>
        <authorList>
            <person name="Holt L.J."/>
            <person name="Tuch B.B."/>
            <person name="Villen J."/>
            <person name="Johnson A.D."/>
            <person name="Gygi S.P."/>
            <person name="Morgan D.O."/>
        </authorList>
    </citation>
    <scope>IDENTIFICATION BY MASS SPECTROMETRY [LARGE SCALE ANALYSIS]</scope>
</reference>
<reference key="9">
    <citation type="journal article" date="2017" name="Mol. Cell. Biol.">
        <title>An In vitro TORC1 kinase assay that recapitulates the Gtr-independent glutamine-responsive TORC1 activation mechanism on yeast vacuoles.</title>
        <authorList>
            <person name="Tanigawa M."/>
            <person name="Maeda T."/>
        </authorList>
    </citation>
    <scope>SUBCELLULAR LOCATION</scope>
</reference>
<reference key="10">
    <citation type="journal article" date="2018" name="PLoS Genet.">
        <title>Gtr/Ego-independent TORC1 activation is achieved through a glutamine-sensitive interaction with Pib2 on the vacuolar membrane.</title>
        <authorList>
            <person name="Ukai H."/>
            <person name="Araki Y."/>
            <person name="Kira S."/>
            <person name="Oikawa Y."/>
            <person name="May A.I."/>
            <person name="Noda T."/>
        </authorList>
    </citation>
    <scope>INTERACTION WITH PIB2</scope>
    <scope>IDENTIFICATION BY MASS SPECTROMETRY</scope>
</reference>